<organism>
    <name type="scientific">Vibrio cholerae serotype O1 (strain ATCC 39315 / El Tor Inaba N16961)</name>
    <dbReference type="NCBI Taxonomy" id="243277"/>
    <lineage>
        <taxon>Bacteria</taxon>
        <taxon>Pseudomonadati</taxon>
        <taxon>Pseudomonadota</taxon>
        <taxon>Gammaproteobacteria</taxon>
        <taxon>Vibrionales</taxon>
        <taxon>Vibrionaceae</taxon>
        <taxon>Vibrio</taxon>
    </lineage>
</organism>
<gene>
    <name type="primary">rluA</name>
    <name type="ordered locus">VC_2505</name>
</gene>
<comment type="function">
    <text evidence="1">Dual specificity enzyme that catalyzes the synthesis of pseudouridine from uracil-746 in 23S ribosomal RNA and from uracil-32 in the anticodon stem and loop of transfer RNAs.</text>
</comment>
<comment type="catalytic activity">
    <reaction evidence="1">
        <text>uridine(32) in tRNA = pseudouridine(32) in tRNA</text>
        <dbReference type="Rhea" id="RHEA:42544"/>
        <dbReference type="Rhea" id="RHEA-COMP:10107"/>
        <dbReference type="Rhea" id="RHEA-COMP:10108"/>
        <dbReference type="ChEBI" id="CHEBI:65314"/>
        <dbReference type="ChEBI" id="CHEBI:65315"/>
        <dbReference type="EC" id="5.4.99.28"/>
    </reaction>
</comment>
<comment type="catalytic activity">
    <reaction evidence="1">
        <text>uridine(746) in 23S rRNA = pseudouridine(746) in 23S rRNA</text>
        <dbReference type="Rhea" id="RHEA:42548"/>
        <dbReference type="Rhea" id="RHEA-COMP:10109"/>
        <dbReference type="Rhea" id="RHEA-COMP:10110"/>
        <dbReference type="ChEBI" id="CHEBI:65314"/>
        <dbReference type="ChEBI" id="CHEBI:65315"/>
        <dbReference type="EC" id="5.4.99.29"/>
    </reaction>
</comment>
<comment type="similarity">
    <text evidence="2">Belongs to the pseudouridine synthase RluA family.</text>
</comment>
<keyword id="KW-0413">Isomerase</keyword>
<keyword id="KW-1185">Reference proteome</keyword>
<keyword id="KW-0698">rRNA processing</keyword>
<keyword id="KW-0819">tRNA processing</keyword>
<feature type="chain" id="PRO_0000162660" description="Dual-specificity RNA pseudouridine synthase RluA">
    <location>
        <begin position="1"/>
        <end position="245"/>
    </location>
</feature>
<feature type="active site" evidence="1">
    <location>
        <position position="64"/>
    </location>
</feature>
<protein>
    <recommendedName>
        <fullName evidence="1">Dual-specificity RNA pseudouridine synthase RluA</fullName>
        <ecNumber evidence="1">5.4.99.28</ecNumber>
        <ecNumber evidence="1">5.4.99.29</ecNumber>
    </recommendedName>
    <alternativeName>
        <fullName evidence="1">23S rRNA pseudouridine(746) synthase</fullName>
    </alternativeName>
    <alternativeName>
        <fullName evidence="1">Ribosomal large subunit pseudouridine synthase A</fullName>
    </alternativeName>
    <alternativeName>
        <fullName evidence="1">rRNA pseudouridylate synthase A</fullName>
    </alternativeName>
    <alternativeName>
        <fullName evidence="1">rRNA-uridine isomerase A</fullName>
    </alternativeName>
    <alternativeName>
        <fullName evidence="1">tRNA pseudouridine(32) synthase</fullName>
    </alternativeName>
</protein>
<evidence type="ECO:0000250" key="1">
    <source>
        <dbReference type="UniProtKB" id="P0AA37"/>
    </source>
</evidence>
<evidence type="ECO:0000305" key="2"/>
<dbReference type="EC" id="5.4.99.28" evidence="1"/>
<dbReference type="EC" id="5.4.99.29" evidence="1"/>
<dbReference type="EMBL" id="AE003852">
    <property type="protein sequence ID" value="AAF95647.1"/>
    <property type="molecule type" value="Genomic_DNA"/>
</dbReference>
<dbReference type="PIR" id="G82068">
    <property type="entry name" value="G82068"/>
</dbReference>
<dbReference type="RefSeq" id="NP_232134.1">
    <property type="nucleotide sequence ID" value="NC_002505.1"/>
</dbReference>
<dbReference type="RefSeq" id="WP_001251798.1">
    <property type="nucleotide sequence ID" value="NZ_LT906614.1"/>
</dbReference>
<dbReference type="SMR" id="Q9KP71"/>
<dbReference type="STRING" id="243277.VC_2505"/>
<dbReference type="DNASU" id="2615169"/>
<dbReference type="EnsemblBacteria" id="AAF95647">
    <property type="protein sequence ID" value="AAF95647"/>
    <property type="gene ID" value="VC_2505"/>
</dbReference>
<dbReference type="KEGG" id="vch:VC_2505"/>
<dbReference type="PATRIC" id="fig|243277.26.peg.2386"/>
<dbReference type="eggNOG" id="COG0564">
    <property type="taxonomic scope" value="Bacteria"/>
</dbReference>
<dbReference type="HOGENOM" id="CLU_016902_11_1_6"/>
<dbReference type="Proteomes" id="UP000000584">
    <property type="component" value="Chromosome 1"/>
</dbReference>
<dbReference type="GO" id="GO:0160142">
    <property type="term" value="F:23S rRNA pseudouridine(746) synthase activity"/>
    <property type="evidence" value="ECO:0007669"/>
    <property type="project" value="UniProtKB-EC"/>
</dbReference>
<dbReference type="GO" id="GO:0009982">
    <property type="term" value="F:pseudouridine synthase activity"/>
    <property type="evidence" value="ECO:0000318"/>
    <property type="project" value="GO_Central"/>
</dbReference>
<dbReference type="GO" id="GO:0003723">
    <property type="term" value="F:RNA binding"/>
    <property type="evidence" value="ECO:0007669"/>
    <property type="project" value="InterPro"/>
</dbReference>
<dbReference type="GO" id="GO:0160151">
    <property type="term" value="F:tRNA pseudouridine(32) synthase activity"/>
    <property type="evidence" value="ECO:0007669"/>
    <property type="project" value="UniProtKB-EC"/>
</dbReference>
<dbReference type="GO" id="GO:0000455">
    <property type="term" value="P:enzyme-directed rRNA pseudouridine synthesis"/>
    <property type="evidence" value="ECO:0000318"/>
    <property type="project" value="GO_Central"/>
</dbReference>
<dbReference type="GO" id="GO:0008033">
    <property type="term" value="P:tRNA processing"/>
    <property type="evidence" value="ECO:0007669"/>
    <property type="project" value="UniProtKB-KW"/>
</dbReference>
<dbReference type="CDD" id="cd02869">
    <property type="entry name" value="PseudoU_synth_RluA_like"/>
    <property type="match status" value="1"/>
</dbReference>
<dbReference type="FunFam" id="3.30.2350.10:FF:000005">
    <property type="entry name" value="Pseudouridine synthase"/>
    <property type="match status" value="1"/>
</dbReference>
<dbReference type="Gene3D" id="3.30.2350.10">
    <property type="entry name" value="Pseudouridine synthase"/>
    <property type="match status" value="1"/>
</dbReference>
<dbReference type="InterPro" id="IPR020103">
    <property type="entry name" value="PsdUridine_synth_cat_dom_sf"/>
</dbReference>
<dbReference type="InterPro" id="IPR006224">
    <property type="entry name" value="PsdUridine_synth_RluA-like_CS"/>
</dbReference>
<dbReference type="InterPro" id="IPR006145">
    <property type="entry name" value="PsdUridine_synth_RsuA/RluA"/>
</dbReference>
<dbReference type="InterPro" id="IPR050188">
    <property type="entry name" value="RluA_PseudoU_synthase"/>
</dbReference>
<dbReference type="PANTHER" id="PTHR21600:SF91">
    <property type="entry name" value="DUAL-SPECIFICITY RNA PSEUDOURIDINE SYNTHASE RLUA"/>
    <property type="match status" value="1"/>
</dbReference>
<dbReference type="PANTHER" id="PTHR21600">
    <property type="entry name" value="MITOCHONDRIAL RNA PSEUDOURIDINE SYNTHASE"/>
    <property type="match status" value="1"/>
</dbReference>
<dbReference type="Pfam" id="PF00849">
    <property type="entry name" value="PseudoU_synth_2"/>
    <property type="match status" value="1"/>
</dbReference>
<dbReference type="SUPFAM" id="SSF55120">
    <property type="entry name" value="Pseudouridine synthase"/>
    <property type="match status" value="1"/>
</dbReference>
<dbReference type="PROSITE" id="PS01129">
    <property type="entry name" value="PSI_RLU"/>
    <property type="match status" value="1"/>
</dbReference>
<reference key="1">
    <citation type="journal article" date="2000" name="Nature">
        <title>DNA sequence of both chromosomes of the cholera pathogen Vibrio cholerae.</title>
        <authorList>
            <person name="Heidelberg J.F."/>
            <person name="Eisen J.A."/>
            <person name="Nelson W.C."/>
            <person name="Clayton R.A."/>
            <person name="Gwinn M.L."/>
            <person name="Dodson R.J."/>
            <person name="Haft D.H."/>
            <person name="Hickey E.K."/>
            <person name="Peterson J.D."/>
            <person name="Umayam L.A."/>
            <person name="Gill S.R."/>
            <person name="Nelson K.E."/>
            <person name="Read T.D."/>
            <person name="Tettelin H."/>
            <person name="Richardson D.L."/>
            <person name="Ermolaeva M.D."/>
            <person name="Vamathevan J.J."/>
            <person name="Bass S."/>
            <person name="Qin H."/>
            <person name="Dragoi I."/>
            <person name="Sellers P."/>
            <person name="McDonald L.A."/>
            <person name="Utterback T.R."/>
            <person name="Fleischmann R.D."/>
            <person name="Nierman W.C."/>
            <person name="White O."/>
            <person name="Salzberg S.L."/>
            <person name="Smith H.O."/>
            <person name="Colwell R.R."/>
            <person name="Mekalanos J.J."/>
            <person name="Venter J.C."/>
            <person name="Fraser C.M."/>
        </authorList>
    </citation>
    <scope>NUCLEOTIDE SEQUENCE [LARGE SCALE GENOMIC DNA]</scope>
    <source>
        <strain>ATCC 39315 / El Tor Inaba N16961</strain>
    </source>
</reference>
<name>RLUA_VIBCH</name>
<sequence>MAMTEYNPPKDPWIDVIYEDEHIIAANKPSGLLSVPGRPVEHYDSMWARLVDYCPDVKVVHRLDMSTSGLILFAKGKHMESALKKQFQYRLTHKIYYARVWGVMEQNEGEVNLPLCCDWPNRPKQKVCFEEGRDSLTRYQVVKREEKTTVVRLIPITGRSHQLRVHMQSLGHPIVGDDLYAPPEAVEFADRLQLHAAELCFYHPRSHWLRTLFVPCDFYPEAEEQILQHFDPERKLPDYKKLSQD</sequence>
<accession>Q9KP71</accession>
<proteinExistence type="inferred from homology"/>